<evidence type="ECO:0000255" key="1">
    <source>
        <dbReference type="HAMAP-Rule" id="MF_01152"/>
    </source>
</evidence>
<reference key="1">
    <citation type="journal article" date="1997" name="Gene">
        <title>Molecular analysis of the Rhodobacter capsulatus chaperone dnaKJ operon: purification and characterization of DnaK.</title>
        <authorList>
            <person name="Nickel C.M."/>
            <person name="Vandekerckhove J."/>
            <person name="Beyer P."/>
            <person name="Tadros M.H."/>
        </authorList>
    </citation>
    <scope>NUCLEOTIDE SEQUENCE [GENOMIC DNA]</scope>
    <source>
        <strain>ATCC 33303 / B10</strain>
    </source>
</reference>
<comment type="function">
    <text evidence="1">Participates actively in the response to hyperosmotic and heat shock by preventing the aggregation of stress-denatured proteins and by disaggregating proteins, also in an autonomous, DnaK-independent fashion. Unfolded proteins bind initially to DnaJ; upon interaction with the DnaJ-bound protein, DnaK hydrolyzes its bound ATP, resulting in the formation of a stable complex. GrpE releases ADP from DnaK; ATP binding to DnaK triggers the release of the substrate protein, thus completing the reaction cycle. Several rounds of ATP-dependent interactions between DnaJ, DnaK and GrpE are required for fully efficient folding. Also involved, together with DnaK and GrpE, in the DNA replication of plasmids through activation of initiation proteins.</text>
</comment>
<comment type="cofactor">
    <cofactor evidence="1">
        <name>Zn(2+)</name>
        <dbReference type="ChEBI" id="CHEBI:29105"/>
    </cofactor>
    <text evidence="1">Binds 2 Zn(2+) ions per monomer.</text>
</comment>
<comment type="subunit">
    <text evidence="1">Homodimer.</text>
</comment>
<comment type="subcellular location">
    <subcellularLocation>
        <location evidence="1">Cytoplasm</location>
    </subcellularLocation>
</comment>
<comment type="domain">
    <text evidence="1">The J domain is necessary and sufficient to stimulate DnaK ATPase activity. Zinc center 1 plays an important role in the autonomous, DnaK-independent chaperone activity of DnaJ. Zinc center 2 is essential for interaction with DnaK and for DnaJ activity.</text>
</comment>
<comment type="similarity">
    <text evidence="1">Belongs to the DnaJ family.</text>
</comment>
<dbReference type="EMBL" id="U57637">
    <property type="protein sequence ID" value="AAC45474.1"/>
    <property type="molecule type" value="Genomic_DNA"/>
</dbReference>
<dbReference type="SMR" id="Q52702"/>
<dbReference type="GO" id="GO:0005737">
    <property type="term" value="C:cytoplasm"/>
    <property type="evidence" value="ECO:0007669"/>
    <property type="project" value="UniProtKB-SubCell"/>
</dbReference>
<dbReference type="GO" id="GO:0005524">
    <property type="term" value="F:ATP binding"/>
    <property type="evidence" value="ECO:0007669"/>
    <property type="project" value="InterPro"/>
</dbReference>
<dbReference type="GO" id="GO:0031072">
    <property type="term" value="F:heat shock protein binding"/>
    <property type="evidence" value="ECO:0007669"/>
    <property type="project" value="InterPro"/>
</dbReference>
<dbReference type="GO" id="GO:0051082">
    <property type="term" value="F:unfolded protein binding"/>
    <property type="evidence" value="ECO:0007669"/>
    <property type="project" value="UniProtKB-UniRule"/>
</dbReference>
<dbReference type="GO" id="GO:0008270">
    <property type="term" value="F:zinc ion binding"/>
    <property type="evidence" value="ECO:0007669"/>
    <property type="project" value="UniProtKB-UniRule"/>
</dbReference>
<dbReference type="GO" id="GO:0051085">
    <property type="term" value="P:chaperone cofactor-dependent protein refolding"/>
    <property type="evidence" value="ECO:0007669"/>
    <property type="project" value="TreeGrafter"/>
</dbReference>
<dbReference type="GO" id="GO:0006260">
    <property type="term" value="P:DNA replication"/>
    <property type="evidence" value="ECO:0007669"/>
    <property type="project" value="UniProtKB-KW"/>
</dbReference>
<dbReference type="GO" id="GO:0042026">
    <property type="term" value="P:protein refolding"/>
    <property type="evidence" value="ECO:0007669"/>
    <property type="project" value="TreeGrafter"/>
</dbReference>
<dbReference type="GO" id="GO:0009408">
    <property type="term" value="P:response to heat"/>
    <property type="evidence" value="ECO:0007669"/>
    <property type="project" value="InterPro"/>
</dbReference>
<dbReference type="CDD" id="cd06257">
    <property type="entry name" value="DnaJ"/>
    <property type="match status" value="1"/>
</dbReference>
<dbReference type="CDD" id="cd10747">
    <property type="entry name" value="DnaJ_C"/>
    <property type="match status" value="1"/>
</dbReference>
<dbReference type="CDD" id="cd10719">
    <property type="entry name" value="DnaJ_zf"/>
    <property type="match status" value="1"/>
</dbReference>
<dbReference type="FunFam" id="1.10.287.110:FF:000034">
    <property type="entry name" value="Chaperone protein DnaJ"/>
    <property type="match status" value="1"/>
</dbReference>
<dbReference type="FunFam" id="2.10.230.10:FF:000002">
    <property type="entry name" value="Molecular chaperone DnaJ"/>
    <property type="match status" value="1"/>
</dbReference>
<dbReference type="FunFam" id="2.60.260.20:FF:000004">
    <property type="entry name" value="Molecular chaperone DnaJ"/>
    <property type="match status" value="1"/>
</dbReference>
<dbReference type="Gene3D" id="1.10.287.110">
    <property type="entry name" value="DnaJ domain"/>
    <property type="match status" value="1"/>
</dbReference>
<dbReference type="Gene3D" id="2.10.230.10">
    <property type="entry name" value="Heat shock protein DnaJ, cysteine-rich domain"/>
    <property type="match status" value="1"/>
</dbReference>
<dbReference type="Gene3D" id="2.60.260.20">
    <property type="entry name" value="Urease metallochaperone UreE, N-terminal domain"/>
    <property type="match status" value="2"/>
</dbReference>
<dbReference type="HAMAP" id="MF_01152">
    <property type="entry name" value="DnaJ"/>
    <property type="match status" value="1"/>
</dbReference>
<dbReference type="InterPro" id="IPR012724">
    <property type="entry name" value="DnaJ"/>
</dbReference>
<dbReference type="InterPro" id="IPR002939">
    <property type="entry name" value="DnaJ_C"/>
</dbReference>
<dbReference type="InterPro" id="IPR001623">
    <property type="entry name" value="DnaJ_domain"/>
</dbReference>
<dbReference type="InterPro" id="IPR018253">
    <property type="entry name" value="DnaJ_domain_CS"/>
</dbReference>
<dbReference type="InterPro" id="IPR008971">
    <property type="entry name" value="HSP40/DnaJ_pept-bd"/>
</dbReference>
<dbReference type="InterPro" id="IPR001305">
    <property type="entry name" value="HSP_DnaJ_Cys-rich_dom"/>
</dbReference>
<dbReference type="InterPro" id="IPR036410">
    <property type="entry name" value="HSP_DnaJ_Cys-rich_dom_sf"/>
</dbReference>
<dbReference type="InterPro" id="IPR036869">
    <property type="entry name" value="J_dom_sf"/>
</dbReference>
<dbReference type="NCBIfam" id="TIGR02349">
    <property type="entry name" value="DnaJ_bact"/>
    <property type="match status" value="1"/>
</dbReference>
<dbReference type="NCBIfam" id="NF008035">
    <property type="entry name" value="PRK10767.1"/>
    <property type="match status" value="1"/>
</dbReference>
<dbReference type="PANTHER" id="PTHR43096:SF48">
    <property type="entry name" value="CHAPERONE PROTEIN DNAJ"/>
    <property type="match status" value="1"/>
</dbReference>
<dbReference type="PANTHER" id="PTHR43096">
    <property type="entry name" value="DNAJ HOMOLOG 1, MITOCHONDRIAL-RELATED"/>
    <property type="match status" value="1"/>
</dbReference>
<dbReference type="Pfam" id="PF00226">
    <property type="entry name" value="DnaJ"/>
    <property type="match status" value="1"/>
</dbReference>
<dbReference type="Pfam" id="PF01556">
    <property type="entry name" value="DnaJ_C"/>
    <property type="match status" value="1"/>
</dbReference>
<dbReference type="Pfam" id="PF00684">
    <property type="entry name" value="DnaJ_CXXCXGXG"/>
    <property type="match status" value="1"/>
</dbReference>
<dbReference type="PRINTS" id="PR00625">
    <property type="entry name" value="JDOMAIN"/>
</dbReference>
<dbReference type="SMART" id="SM00271">
    <property type="entry name" value="DnaJ"/>
    <property type="match status" value="1"/>
</dbReference>
<dbReference type="SUPFAM" id="SSF46565">
    <property type="entry name" value="Chaperone J-domain"/>
    <property type="match status" value="1"/>
</dbReference>
<dbReference type="SUPFAM" id="SSF57938">
    <property type="entry name" value="DnaJ/Hsp40 cysteine-rich domain"/>
    <property type="match status" value="1"/>
</dbReference>
<dbReference type="SUPFAM" id="SSF49493">
    <property type="entry name" value="HSP40/DnaJ peptide-binding domain"/>
    <property type="match status" value="2"/>
</dbReference>
<dbReference type="PROSITE" id="PS00636">
    <property type="entry name" value="DNAJ_1"/>
    <property type="match status" value="1"/>
</dbReference>
<dbReference type="PROSITE" id="PS50076">
    <property type="entry name" value="DNAJ_2"/>
    <property type="match status" value="1"/>
</dbReference>
<dbReference type="PROSITE" id="PS51188">
    <property type="entry name" value="ZF_CR"/>
    <property type="match status" value="1"/>
</dbReference>
<organism>
    <name type="scientific">Rhodobacter capsulatus</name>
    <name type="common">Rhodopseudomonas capsulata</name>
    <dbReference type="NCBI Taxonomy" id="1061"/>
    <lineage>
        <taxon>Bacteria</taxon>
        <taxon>Pseudomonadati</taxon>
        <taxon>Pseudomonadota</taxon>
        <taxon>Alphaproteobacteria</taxon>
        <taxon>Rhodobacterales</taxon>
        <taxon>Rhodobacter group</taxon>
        <taxon>Rhodobacter</taxon>
    </lineage>
</organism>
<feature type="chain" id="PRO_0000070868" description="Chaperone protein DnaJ">
    <location>
        <begin position="1"/>
        <end position="384"/>
    </location>
</feature>
<feature type="domain" description="J" evidence="1">
    <location>
        <begin position="5"/>
        <end position="70"/>
    </location>
</feature>
<feature type="repeat" description="CXXCXGXG motif">
    <location>
        <begin position="156"/>
        <end position="163"/>
    </location>
</feature>
<feature type="repeat" description="CXXCXGXG motif">
    <location>
        <begin position="173"/>
        <end position="180"/>
    </location>
</feature>
<feature type="repeat" description="CXXCXGXG motif">
    <location>
        <begin position="195"/>
        <end position="202"/>
    </location>
</feature>
<feature type="repeat" description="CXXCXGXG motif">
    <location>
        <begin position="209"/>
        <end position="216"/>
    </location>
</feature>
<feature type="zinc finger region" description="CR-type" evidence="1">
    <location>
        <begin position="143"/>
        <end position="221"/>
    </location>
</feature>
<feature type="binding site" evidence="1">
    <location>
        <position position="156"/>
    </location>
    <ligand>
        <name>Zn(2+)</name>
        <dbReference type="ChEBI" id="CHEBI:29105"/>
        <label>1</label>
    </ligand>
</feature>
<feature type="binding site" evidence="1">
    <location>
        <position position="159"/>
    </location>
    <ligand>
        <name>Zn(2+)</name>
        <dbReference type="ChEBI" id="CHEBI:29105"/>
        <label>1</label>
    </ligand>
</feature>
<feature type="binding site" evidence="1">
    <location>
        <position position="173"/>
    </location>
    <ligand>
        <name>Zn(2+)</name>
        <dbReference type="ChEBI" id="CHEBI:29105"/>
        <label>2</label>
    </ligand>
</feature>
<feature type="binding site" evidence="1">
    <location>
        <position position="176"/>
    </location>
    <ligand>
        <name>Zn(2+)</name>
        <dbReference type="ChEBI" id="CHEBI:29105"/>
        <label>2</label>
    </ligand>
</feature>
<feature type="binding site" evidence="1">
    <location>
        <position position="195"/>
    </location>
    <ligand>
        <name>Zn(2+)</name>
        <dbReference type="ChEBI" id="CHEBI:29105"/>
        <label>2</label>
    </ligand>
</feature>
<feature type="binding site" evidence="1">
    <location>
        <position position="198"/>
    </location>
    <ligand>
        <name>Zn(2+)</name>
        <dbReference type="ChEBI" id="CHEBI:29105"/>
        <label>2</label>
    </ligand>
</feature>
<feature type="binding site" evidence="1">
    <location>
        <position position="209"/>
    </location>
    <ligand>
        <name>Zn(2+)</name>
        <dbReference type="ChEBI" id="CHEBI:29105"/>
        <label>1</label>
    </ligand>
</feature>
<feature type="binding site" evidence="1">
    <location>
        <position position="212"/>
    </location>
    <ligand>
        <name>Zn(2+)</name>
        <dbReference type="ChEBI" id="CHEBI:29105"/>
        <label>1</label>
    </ligand>
</feature>
<gene>
    <name evidence="1" type="primary">dnaJ</name>
</gene>
<keyword id="KW-0143">Chaperone</keyword>
<keyword id="KW-0963">Cytoplasm</keyword>
<keyword id="KW-0235">DNA replication</keyword>
<keyword id="KW-0479">Metal-binding</keyword>
<keyword id="KW-0677">Repeat</keyword>
<keyword id="KW-0346">Stress response</keyword>
<keyword id="KW-0862">Zinc</keyword>
<keyword id="KW-0863">Zinc-finger</keyword>
<name>DNAJ_RHOCA</name>
<protein>
    <recommendedName>
        <fullName evidence="1">Chaperone protein DnaJ</fullName>
    </recommendedName>
</protein>
<sequence>MAKVDFYEVLGVSKGASAEEIKKAYRSKAKELHPDRNQGQSAAEAQFKEVNGAYDVLKDGDKKAAYDRYGHAAFEGGMGGGGPRGPYGQGADFSSAFSDVFEDLFGDFMGGRGGPGGGGRRVRRRGSDLRYNMRVTLEEAFKGAQKTITVPGSAACGSCNGTGAEGGAEPQTCPTCSGLGKVRAQNGFFTVERTCPTCGGQGQVVKNPCRVCHGSGRIEKERTLSVNIPAGVETGTRIRLAGEGEAGMRGGPSGDLYIFIEVREHAIFQRDGVNLFCRVPVSMVSAALGGEVEVPTIDGGRSKVKVPVGSQSGRQMRLRGKGMPALRGGGIGDMVIELAVETPVNLTARQKELLDEFQRIQAENNPEGASFFQKVKSFWDGMKG</sequence>
<proteinExistence type="inferred from homology"/>
<accession>Q52702</accession>